<accession>A7HN62</accession>
<keyword id="KW-0963">Cytoplasm</keyword>
<keyword id="KW-0648">Protein biosynthesis</keyword>
<keyword id="KW-1185">Reference proteome</keyword>
<comment type="function">
    <text evidence="1">Responsible for the release of ribosomes from messenger RNA at the termination of protein biosynthesis. May increase the efficiency of translation by recycling ribosomes from one round of translation to another.</text>
</comment>
<comment type="subcellular location">
    <subcellularLocation>
        <location evidence="1">Cytoplasm</location>
    </subcellularLocation>
</comment>
<comment type="similarity">
    <text evidence="1">Belongs to the RRF family.</text>
</comment>
<feature type="chain" id="PRO_1000071062" description="Ribosome-recycling factor">
    <location>
        <begin position="1"/>
        <end position="184"/>
    </location>
</feature>
<proteinExistence type="inferred from homology"/>
<gene>
    <name evidence="1" type="primary">frr</name>
    <name type="ordered locus">Fnod_1502</name>
</gene>
<evidence type="ECO:0000255" key="1">
    <source>
        <dbReference type="HAMAP-Rule" id="MF_00040"/>
    </source>
</evidence>
<organism>
    <name type="scientific">Fervidobacterium nodosum (strain ATCC 35602 / DSM 5306 / Rt17-B1)</name>
    <dbReference type="NCBI Taxonomy" id="381764"/>
    <lineage>
        <taxon>Bacteria</taxon>
        <taxon>Thermotogati</taxon>
        <taxon>Thermotogota</taxon>
        <taxon>Thermotogae</taxon>
        <taxon>Thermotogales</taxon>
        <taxon>Fervidobacteriaceae</taxon>
        <taxon>Fervidobacterium</taxon>
    </lineage>
</organism>
<dbReference type="EMBL" id="CP000771">
    <property type="protein sequence ID" value="ABS61345.1"/>
    <property type="molecule type" value="Genomic_DNA"/>
</dbReference>
<dbReference type="RefSeq" id="WP_011994650.1">
    <property type="nucleotide sequence ID" value="NC_009718.1"/>
</dbReference>
<dbReference type="SMR" id="A7HN62"/>
<dbReference type="STRING" id="381764.Fnod_1502"/>
<dbReference type="KEGG" id="fno:Fnod_1502"/>
<dbReference type="eggNOG" id="COG0233">
    <property type="taxonomic scope" value="Bacteria"/>
</dbReference>
<dbReference type="HOGENOM" id="CLU_073981_2_0_0"/>
<dbReference type="OrthoDB" id="9804006at2"/>
<dbReference type="Proteomes" id="UP000002415">
    <property type="component" value="Chromosome"/>
</dbReference>
<dbReference type="GO" id="GO:0005737">
    <property type="term" value="C:cytoplasm"/>
    <property type="evidence" value="ECO:0007669"/>
    <property type="project" value="UniProtKB-SubCell"/>
</dbReference>
<dbReference type="GO" id="GO:0043023">
    <property type="term" value="F:ribosomal large subunit binding"/>
    <property type="evidence" value="ECO:0007669"/>
    <property type="project" value="TreeGrafter"/>
</dbReference>
<dbReference type="GO" id="GO:0006415">
    <property type="term" value="P:translational termination"/>
    <property type="evidence" value="ECO:0007669"/>
    <property type="project" value="UniProtKB-UniRule"/>
</dbReference>
<dbReference type="CDD" id="cd00520">
    <property type="entry name" value="RRF"/>
    <property type="match status" value="1"/>
</dbReference>
<dbReference type="FunFam" id="1.10.132.20:FF:000001">
    <property type="entry name" value="Ribosome-recycling factor"/>
    <property type="match status" value="1"/>
</dbReference>
<dbReference type="FunFam" id="3.30.1360.40:FF:000001">
    <property type="entry name" value="Ribosome-recycling factor"/>
    <property type="match status" value="1"/>
</dbReference>
<dbReference type="Gene3D" id="3.30.1360.40">
    <property type="match status" value="1"/>
</dbReference>
<dbReference type="Gene3D" id="1.10.132.20">
    <property type="entry name" value="Ribosome-recycling factor"/>
    <property type="match status" value="1"/>
</dbReference>
<dbReference type="HAMAP" id="MF_00040">
    <property type="entry name" value="RRF"/>
    <property type="match status" value="1"/>
</dbReference>
<dbReference type="InterPro" id="IPR002661">
    <property type="entry name" value="Ribosome_recyc_fac"/>
</dbReference>
<dbReference type="InterPro" id="IPR023584">
    <property type="entry name" value="Ribosome_recyc_fac_dom"/>
</dbReference>
<dbReference type="InterPro" id="IPR036191">
    <property type="entry name" value="RRF_sf"/>
</dbReference>
<dbReference type="NCBIfam" id="TIGR00496">
    <property type="entry name" value="frr"/>
    <property type="match status" value="1"/>
</dbReference>
<dbReference type="PANTHER" id="PTHR20982:SF3">
    <property type="entry name" value="MITOCHONDRIAL RIBOSOME RECYCLING FACTOR PSEUDO 1"/>
    <property type="match status" value="1"/>
</dbReference>
<dbReference type="PANTHER" id="PTHR20982">
    <property type="entry name" value="RIBOSOME RECYCLING FACTOR"/>
    <property type="match status" value="1"/>
</dbReference>
<dbReference type="Pfam" id="PF01765">
    <property type="entry name" value="RRF"/>
    <property type="match status" value="1"/>
</dbReference>
<dbReference type="SUPFAM" id="SSF55194">
    <property type="entry name" value="Ribosome recycling factor, RRF"/>
    <property type="match status" value="1"/>
</dbReference>
<sequence length="184" mass="21316">MVNSFIKTTEEKMKKSVEKIAEELKHLRTGRATPAVLEEIKIDYYGVPTPVLQVAQVTTEERQLVIKPWERNLLNVIEKAILASDLGLTPVNDGTVVRINFPTPTTEQRQKWVKKAKEIVEEGKVAVRNIRRDILKDIKDKKKAGEISEDDEKRLEKEIQNLTDKYVAELDKLFEKKEKEIMEF</sequence>
<reference key="1">
    <citation type="submission" date="2007-07" db="EMBL/GenBank/DDBJ databases">
        <title>Complete sequence of Fervidobacterium nodosum Rt17-B1.</title>
        <authorList>
            <consortium name="US DOE Joint Genome Institute"/>
            <person name="Copeland A."/>
            <person name="Lucas S."/>
            <person name="Lapidus A."/>
            <person name="Barry K."/>
            <person name="Glavina del Rio T."/>
            <person name="Dalin E."/>
            <person name="Tice H."/>
            <person name="Pitluck S."/>
            <person name="Saunders E."/>
            <person name="Brettin T."/>
            <person name="Bruce D."/>
            <person name="Detter J.C."/>
            <person name="Han C."/>
            <person name="Schmutz J."/>
            <person name="Larimer F."/>
            <person name="Land M."/>
            <person name="Hauser L."/>
            <person name="Kyrpides N."/>
            <person name="Mikhailova N."/>
            <person name="Nelson K."/>
            <person name="Gogarten J.P."/>
            <person name="Noll K."/>
            <person name="Richardson P."/>
        </authorList>
    </citation>
    <scope>NUCLEOTIDE SEQUENCE [LARGE SCALE GENOMIC DNA]</scope>
    <source>
        <strain>ATCC 35602 / DSM 5306 / Rt17-B1</strain>
    </source>
</reference>
<name>RRF_FERNB</name>
<protein>
    <recommendedName>
        <fullName evidence="1">Ribosome-recycling factor</fullName>
        <shortName evidence="1">RRF</shortName>
    </recommendedName>
    <alternativeName>
        <fullName evidence="1">Ribosome-releasing factor</fullName>
    </alternativeName>
</protein>